<proteinExistence type="inferred from homology"/>
<comment type="similarity">
    <text evidence="1">Belongs to the bacterial ribosomal protein bS16 family.</text>
</comment>
<keyword id="KW-1185">Reference proteome</keyword>
<keyword id="KW-0687">Ribonucleoprotein</keyword>
<keyword id="KW-0689">Ribosomal protein</keyword>
<evidence type="ECO:0000255" key="1">
    <source>
        <dbReference type="HAMAP-Rule" id="MF_00385"/>
    </source>
</evidence>
<evidence type="ECO:0000305" key="2"/>
<reference key="1">
    <citation type="journal article" date="2011" name="BMC Genomics">
        <title>Complete genome sequence of the filamentous anoxygenic phototrophic bacterium Chloroflexus aurantiacus.</title>
        <authorList>
            <person name="Tang K.H."/>
            <person name="Barry K."/>
            <person name="Chertkov O."/>
            <person name="Dalin E."/>
            <person name="Han C.S."/>
            <person name="Hauser L.J."/>
            <person name="Honchak B.M."/>
            <person name="Karbach L.E."/>
            <person name="Land M.L."/>
            <person name="Lapidus A."/>
            <person name="Larimer F.W."/>
            <person name="Mikhailova N."/>
            <person name="Pitluck S."/>
            <person name="Pierson B.K."/>
            <person name="Blankenship R.E."/>
        </authorList>
    </citation>
    <scope>NUCLEOTIDE SEQUENCE [LARGE SCALE GENOMIC DNA]</scope>
    <source>
        <strain>ATCC 29366 / DSM 635 / J-10-fl</strain>
    </source>
</reference>
<protein>
    <recommendedName>
        <fullName evidence="1">Small ribosomal subunit protein bS16</fullName>
    </recommendedName>
    <alternativeName>
        <fullName evidence="2">30S ribosomal protein S16</fullName>
    </alternativeName>
</protein>
<name>RS16_CHLAA</name>
<gene>
    <name evidence="1" type="primary">rpsP</name>
    <name type="ordered locus">Caur_2053</name>
</gene>
<feature type="chain" id="PRO_1000080140" description="Small ribosomal subunit protein bS16">
    <location>
        <begin position="1"/>
        <end position="89"/>
    </location>
</feature>
<accession>A9WEK3</accession>
<organism>
    <name type="scientific">Chloroflexus aurantiacus (strain ATCC 29366 / DSM 635 / J-10-fl)</name>
    <dbReference type="NCBI Taxonomy" id="324602"/>
    <lineage>
        <taxon>Bacteria</taxon>
        <taxon>Bacillati</taxon>
        <taxon>Chloroflexota</taxon>
        <taxon>Chloroflexia</taxon>
        <taxon>Chloroflexales</taxon>
        <taxon>Chloroflexineae</taxon>
        <taxon>Chloroflexaceae</taxon>
        <taxon>Chloroflexus</taxon>
    </lineage>
</organism>
<dbReference type="EMBL" id="CP000909">
    <property type="protein sequence ID" value="ABY35265.1"/>
    <property type="molecule type" value="Genomic_DNA"/>
</dbReference>
<dbReference type="RefSeq" id="WP_012257919.1">
    <property type="nucleotide sequence ID" value="NC_010175.1"/>
</dbReference>
<dbReference type="RefSeq" id="YP_001635654.1">
    <property type="nucleotide sequence ID" value="NC_010175.1"/>
</dbReference>
<dbReference type="SMR" id="A9WEK3"/>
<dbReference type="FunCoup" id="A9WEK3">
    <property type="interactions" value="465"/>
</dbReference>
<dbReference type="STRING" id="324602.Caur_2053"/>
<dbReference type="EnsemblBacteria" id="ABY35265">
    <property type="protein sequence ID" value="ABY35265"/>
    <property type="gene ID" value="Caur_2053"/>
</dbReference>
<dbReference type="KEGG" id="cau:Caur_2053"/>
<dbReference type="PATRIC" id="fig|324602.8.peg.2331"/>
<dbReference type="eggNOG" id="COG0228">
    <property type="taxonomic scope" value="Bacteria"/>
</dbReference>
<dbReference type="HOGENOM" id="CLU_100590_5_2_0"/>
<dbReference type="InParanoid" id="A9WEK3"/>
<dbReference type="Proteomes" id="UP000002008">
    <property type="component" value="Chromosome"/>
</dbReference>
<dbReference type="GO" id="GO:0005737">
    <property type="term" value="C:cytoplasm"/>
    <property type="evidence" value="ECO:0007669"/>
    <property type="project" value="UniProtKB-ARBA"/>
</dbReference>
<dbReference type="GO" id="GO:0015935">
    <property type="term" value="C:small ribosomal subunit"/>
    <property type="evidence" value="ECO:0000318"/>
    <property type="project" value="GO_Central"/>
</dbReference>
<dbReference type="GO" id="GO:0003735">
    <property type="term" value="F:structural constituent of ribosome"/>
    <property type="evidence" value="ECO:0000318"/>
    <property type="project" value="GO_Central"/>
</dbReference>
<dbReference type="GO" id="GO:0006412">
    <property type="term" value="P:translation"/>
    <property type="evidence" value="ECO:0007669"/>
    <property type="project" value="UniProtKB-UniRule"/>
</dbReference>
<dbReference type="FunFam" id="3.30.1320.10:FF:000018">
    <property type="entry name" value="30S ribosomal protein S16"/>
    <property type="match status" value="1"/>
</dbReference>
<dbReference type="Gene3D" id="3.30.1320.10">
    <property type="match status" value="1"/>
</dbReference>
<dbReference type="HAMAP" id="MF_00385">
    <property type="entry name" value="Ribosomal_bS16"/>
    <property type="match status" value="1"/>
</dbReference>
<dbReference type="InterPro" id="IPR000307">
    <property type="entry name" value="Ribosomal_bS16"/>
</dbReference>
<dbReference type="InterPro" id="IPR023803">
    <property type="entry name" value="Ribosomal_bS16_dom_sf"/>
</dbReference>
<dbReference type="NCBIfam" id="TIGR00002">
    <property type="entry name" value="S16"/>
    <property type="match status" value="1"/>
</dbReference>
<dbReference type="PANTHER" id="PTHR12919">
    <property type="entry name" value="30S RIBOSOMAL PROTEIN S16"/>
    <property type="match status" value="1"/>
</dbReference>
<dbReference type="PANTHER" id="PTHR12919:SF20">
    <property type="entry name" value="SMALL RIBOSOMAL SUBUNIT PROTEIN BS16M"/>
    <property type="match status" value="1"/>
</dbReference>
<dbReference type="Pfam" id="PF00886">
    <property type="entry name" value="Ribosomal_S16"/>
    <property type="match status" value="1"/>
</dbReference>
<dbReference type="SUPFAM" id="SSF54565">
    <property type="entry name" value="Ribosomal protein S16"/>
    <property type="match status" value="1"/>
</dbReference>
<sequence>MVKIRLRRTGKTKQPSYRIVVADSRSPRDGKFIETIGYYLPTRQPKVLEIKADRARYWLGVGAQPTEVVVKLLKRVNVLDEQGKVIAEA</sequence>